<comment type="function">
    <text evidence="1">Receptor for retinoic acid. Retinoic acid receptors bind as heterodimers to their target response elements in response to their ligands, all-trans or 9-cis retinoic acid, and regulate gene expression in various biological processes. The RAR/RXR heterodimers bind to the retinoic acid response elements (RARE) composed of tandem 5'-AGGTCA-3' sites known as DR1-DR5. The high affinity ligand for RXRs is 9-cis retinoic acid (By similarity).</text>
</comment>
<comment type="subunit">
    <text evidence="1">Homodimer. Heterodimer; with a RAR molecule. Binds DNA preferentially as a RAR/RXR heterodimer.</text>
</comment>
<comment type="subcellular location">
    <subcellularLocation>
        <location evidence="2">Nucleus</location>
    </subcellularLocation>
</comment>
<comment type="alternative products">
    <event type="alternative splicing"/>
    <isoform>
        <id>P28701-1</id>
        <name>1</name>
        <sequence type="displayed"/>
    </isoform>
    <isoform>
        <id>P28701-2</id>
        <name>2</name>
        <sequence type="described" ref="VSP_011846"/>
    </isoform>
</comment>
<comment type="tissue specificity">
    <text evidence="6">Isoform 1 is highly expressed inliver. Isoform 2 is abundantly expressed in eye and dorsal root ganglia.</text>
</comment>
<comment type="developmental stage">
    <text evidence="5">At stage 16, in the posterior trunk region, expressed in the neural crest and in neural crest cells migrating into the sclerotome. From stages 24 to 27, expressed in the liver and in elements of the developing peripheral nervous system derived from the neural crest, including dorsal root ganglia, cranial ganglia, enteric ganglia and peripheral nerve tracts.</text>
</comment>
<comment type="domain">
    <text>Composed of three domains: a modulating N-terminal domain, a DNA-binding domain and a C-terminal ligand-binding domain.</text>
</comment>
<comment type="similarity">
    <text evidence="8">Belongs to the nuclear hormone receptor family. NR2 subfamily.</text>
</comment>
<accession>P28701</accession>
<accession>Q91380</accession>
<sequence length="467" mass="51233">MYGNYPHFIKFPAGFGNSPVHASSTSVSPSSSLSVGSTVDGHHNYLEAPTNASRALPSPMNTIGSPVNALGSPYRVIASSIGSHPVALSSSAPGMNFVTHSPQPNVLNNVSSSEDIKPLPGLPGIGNMNYPSTSPGSLAKHICAICGDRSSGKHYGVYSCEGCKGFFKRTIRKDLIYTCRDNKDCLIDKRQRNRCQYCRYQKCLAMGMKREAVQEERQGSRERSENEAESTSGGSEDMPVERILEAELAVEPKTEAYSDVNTESSTNDPVTNICHAADKQLFTLVEWAKRIPHFSDLTLEDQVILLRAGWNELLIASFSHRSVSVQDGILLATGLHVHRSSAHSAGVGSIFDRVLTELVSKMKDMQMDKSELGCLRAIVLFNPDAKGLSSPSEVESLREKVYATLEAYTKQKYPEQPGRFAKLLLRLPALRSIGLKCLEHLFFFKLIGDTPIDTFLMEMLETPLQVT</sequence>
<keyword id="KW-0025">Alternative splicing</keyword>
<keyword id="KW-0238">DNA-binding</keyword>
<keyword id="KW-0479">Metal-binding</keyword>
<keyword id="KW-0539">Nucleus</keyword>
<keyword id="KW-0675">Receptor</keyword>
<keyword id="KW-1185">Reference proteome</keyword>
<keyword id="KW-0804">Transcription</keyword>
<keyword id="KW-0805">Transcription regulation</keyword>
<keyword id="KW-0862">Zinc</keyword>
<keyword id="KW-0863">Zinc-finger</keyword>
<name>RXRG_CHICK</name>
<dbReference type="EMBL" id="X58997">
    <property type="protein sequence ID" value="CAA41743.1"/>
    <property type="molecule type" value="mRNA"/>
</dbReference>
<dbReference type="EMBL" id="S72435">
    <property type="protein sequence ID" value="AAB31348.2"/>
    <property type="molecule type" value="mRNA"/>
</dbReference>
<dbReference type="PIR" id="A43781">
    <property type="entry name" value="A43781"/>
</dbReference>
<dbReference type="PIR" id="S46479">
    <property type="entry name" value="S46479"/>
</dbReference>
<dbReference type="RefSeq" id="NP_990625.1">
    <property type="nucleotide sequence ID" value="NM_205294.1"/>
</dbReference>
<dbReference type="SMR" id="P28701"/>
<dbReference type="FunCoup" id="P28701">
    <property type="interactions" value="63"/>
</dbReference>
<dbReference type="STRING" id="9031.ENSGALP00000068361"/>
<dbReference type="PaxDb" id="9031-ENSGALP00000005377"/>
<dbReference type="GeneID" id="396231"/>
<dbReference type="KEGG" id="gga:396231"/>
<dbReference type="CTD" id="6258"/>
<dbReference type="VEuPathDB" id="HostDB:geneid_396231"/>
<dbReference type="eggNOG" id="KOG3575">
    <property type="taxonomic scope" value="Eukaryota"/>
</dbReference>
<dbReference type="InParanoid" id="P28701"/>
<dbReference type="OrthoDB" id="5873264at2759"/>
<dbReference type="PhylomeDB" id="P28701"/>
<dbReference type="PRO" id="PR:P28701"/>
<dbReference type="Proteomes" id="UP000000539">
    <property type="component" value="Unassembled WGS sequence"/>
</dbReference>
<dbReference type="GO" id="GO:0090575">
    <property type="term" value="C:RNA polymerase II transcription regulator complex"/>
    <property type="evidence" value="ECO:0000318"/>
    <property type="project" value="GO_Central"/>
</dbReference>
<dbReference type="GO" id="GO:0005667">
    <property type="term" value="C:transcription regulator complex"/>
    <property type="evidence" value="ECO:0000314"/>
    <property type="project" value="AgBase"/>
</dbReference>
<dbReference type="GO" id="GO:0000987">
    <property type="term" value="F:cis-regulatory region sequence-specific DNA binding"/>
    <property type="evidence" value="ECO:0000314"/>
    <property type="project" value="AgBase"/>
</dbReference>
<dbReference type="GO" id="GO:0004879">
    <property type="term" value="F:nuclear receptor activity"/>
    <property type="evidence" value="ECO:0000318"/>
    <property type="project" value="GO_Central"/>
</dbReference>
<dbReference type="GO" id="GO:0003707">
    <property type="term" value="F:nuclear steroid receptor activity"/>
    <property type="evidence" value="ECO:0007669"/>
    <property type="project" value="InterPro"/>
</dbReference>
<dbReference type="GO" id="GO:0044323">
    <property type="term" value="F:retinoic acid-responsive element binding"/>
    <property type="evidence" value="ECO:0000318"/>
    <property type="project" value="GO_Central"/>
</dbReference>
<dbReference type="GO" id="GO:0008270">
    <property type="term" value="F:zinc ion binding"/>
    <property type="evidence" value="ECO:0007669"/>
    <property type="project" value="UniProtKB-KW"/>
</dbReference>
<dbReference type="GO" id="GO:0030154">
    <property type="term" value="P:cell differentiation"/>
    <property type="evidence" value="ECO:0000318"/>
    <property type="project" value="GO_Central"/>
</dbReference>
<dbReference type="GO" id="GO:0007399">
    <property type="term" value="P:nervous system development"/>
    <property type="evidence" value="ECO:0000318"/>
    <property type="project" value="GO_Central"/>
</dbReference>
<dbReference type="GO" id="GO:0045944">
    <property type="term" value="P:positive regulation of transcription by RNA polymerase II"/>
    <property type="evidence" value="ECO:0000318"/>
    <property type="project" value="GO_Central"/>
</dbReference>
<dbReference type="GO" id="GO:0048384">
    <property type="term" value="P:retinoic acid receptor signaling pathway"/>
    <property type="evidence" value="ECO:0000318"/>
    <property type="project" value="GO_Central"/>
</dbReference>
<dbReference type="CDD" id="cd06956">
    <property type="entry name" value="NR_DBD_RXR"/>
    <property type="match status" value="1"/>
</dbReference>
<dbReference type="CDD" id="cd06943">
    <property type="entry name" value="NR_LBD_RXR_like"/>
    <property type="match status" value="1"/>
</dbReference>
<dbReference type="FunFam" id="1.10.565.10:FF:000002">
    <property type="entry name" value="Retinoic acid receptor RXR-alpha"/>
    <property type="match status" value="1"/>
</dbReference>
<dbReference type="FunFam" id="3.30.50.10:FF:000005">
    <property type="entry name" value="Retinoic acid receptor RXR-alpha"/>
    <property type="match status" value="1"/>
</dbReference>
<dbReference type="Gene3D" id="3.30.50.10">
    <property type="entry name" value="Erythroid Transcription Factor GATA-1, subunit A"/>
    <property type="match status" value="1"/>
</dbReference>
<dbReference type="Gene3D" id="1.10.565.10">
    <property type="entry name" value="Retinoid X Receptor"/>
    <property type="match status" value="1"/>
</dbReference>
<dbReference type="InterPro" id="IPR035500">
    <property type="entry name" value="NHR-like_dom_sf"/>
</dbReference>
<dbReference type="InterPro" id="IPR021780">
    <property type="entry name" value="Nuc_recep-AF1"/>
</dbReference>
<dbReference type="InterPro" id="IPR000536">
    <property type="entry name" value="Nucl_hrmn_rcpt_lig-bd"/>
</dbReference>
<dbReference type="InterPro" id="IPR050274">
    <property type="entry name" value="Nuclear_hormone_rcpt_NR2"/>
</dbReference>
<dbReference type="InterPro" id="IPR001723">
    <property type="entry name" value="Nuclear_hrmn_rcpt"/>
</dbReference>
<dbReference type="InterPro" id="IPR000003">
    <property type="entry name" value="Retinoid-X_rcpt/HNF4"/>
</dbReference>
<dbReference type="InterPro" id="IPR001628">
    <property type="entry name" value="Znf_hrmn_rcpt"/>
</dbReference>
<dbReference type="InterPro" id="IPR013088">
    <property type="entry name" value="Znf_NHR/GATA"/>
</dbReference>
<dbReference type="PANTHER" id="PTHR24083">
    <property type="entry name" value="NUCLEAR HORMONE RECEPTOR"/>
    <property type="match status" value="1"/>
</dbReference>
<dbReference type="Pfam" id="PF00104">
    <property type="entry name" value="Hormone_recep"/>
    <property type="match status" value="1"/>
</dbReference>
<dbReference type="Pfam" id="PF11825">
    <property type="entry name" value="Nuc_recep-AF1"/>
    <property type="match status" value="1"/>
</dbReference>
<dbReference type="Pfam" id="PF00105">
    <property type="entry name" value="zf-C4"/>
    <property type="match status" value="1"/>
</dbReference>
<dbReference type="PRINTS" id="PR00545">
    <property type="entry name" value="RETINOIDXR"/>
</dbReference>
<dbReference type="PRINTS" id="PR00398">
    <property type="entry name" value="STRDHORMONER"/>
</dbReference>
<dbReference type="PRINTS" id="PR00047">
    <property type="entry name" value="STROIDFINGER"/>
</dbReference>
<dbReference type="SMART" id="SM00430">
    <property type="entry name" value="HOLI"/>
    <property type="match status" value="1"/>
</dbReference>
<dbReference type="SMART" id="SM00399">
    <property type="entry name" value="ZnF_C4"/>
    <property type="match status" value="1"/>
</dbReference>
<dbReference type="SUPFAM" id="SSF57716">
    <property type="entry name" value="Glucocorticoid receptor-like (DNA-binding domain)"/>
    <property type="match status" value="1"/>
</dbReference>
<dbReference type="SUPFAM" id="SSF48508">
    <property type="entry name" value="Nuclear receptor ligand-binding domain"/>
    <property type="match status" value="1"/>
</dbReference>
<dbReference type="PROSITE" id="PS51843">
    <property type="entry name" value="NR_LBD"/>
    <property type="match status" value="1"/>
</dbReference>
<dbReference type="PROSITE" id="PS00031">
    <property type="entry name" value="NUCLEAR_REC_DBD_1"/>
    <property type="match status" value="1"/>
</dbReference>
<dbReference type="PROSITE" id="PS51030">
    <property type="entry name" value="NUCLEAR_REC_DBD_2"/>
    <property type="match status" value="1"/>
</dbReference>
<protein>
    <recommendedName>
        <fullName>Retinoic acid receptor RXR-gamma</fullName>
    </recommendedName>
    <alternativeName>
        <fullName>Nuclear receptor subfamily 2 group B member 3</fullName>
    </alternativeName>
    <alternativeName>
        <fullName>Retinoid X receptor gamma</fullName>
    </alternativeName>
</protein>
<evidence type="ECO:0000250" key="1"/>
<evidence type="ECO:0000255" key="2">
    <source>
        <dbReference type="PROSITE-ProRule" id="PRU00407"/>
    </source>
</evidence>
<evidence type="ECO:0000255" key="3">
    <source>
        <dbReference type="PROSITE-ProRule" id="PRU01189"/>
    </source>
</evidence>
<evidence type="ECO:0000256" key="4">
    <source>
        <dbReference type="SAM" id="MobiDB-lite"/>
    </source>
</evidence>
<evidence type="ECO:0000269" key="5">
    <source>
    </source>
</evidence>
<evidence type="ECO:0000269" key="6">
    <source>
    </source>
</evidence>
<evidence type="ECO:0000303" key="7">
    <source>
    </source>
</evidence>
<evidence type="ECO:0000305" key="8"/>
<feature type="chain" id="PRO_0000053578" description="Retinoic acid receptor RXR-gamma">
    <location>
        <begin position="1"/>
        <end position="467"/>
    </location>
</feature>
<feature type="domain" description="NR LBD" evidence="3">
    <location>
        <begin position="235"/>
        <end position="463"/>
    </location>
</feature>
<feature type="DNA-binding region" description="Nuclear receptor" evidence="2">
    <location>
        <begin position="143"/>
        <end position="208"/>
    </location>
</feature>
<feature type="zinc finger region" description="NR C4-type" evidence="2">
    <location>
        <begin position="143"/>
        <end position="163"/>
    </location>
</feature>
<feature type="zinc finger region" description="NR C4-type" evidence="2">
    <location>
        <begin position="179"/>
        <end position="203"/>
    </location>
</feature>
<feature type="region of interest" description="Modulating" evidence="1">
    <location>
        <begin position="1"/>
        <end position="142"/>
    </location>
</feature>
<feature type="region of interest" description="Hinge">
    <location>
        <begin position="209"/>
        <end position="232"/>
    </location>
</feature>
<feature type="region of interest" description="Disordered" evidence="4">
    <location>
        <begin position="214"/>
        <end position="237"/>
    </location>
</feature>
<feature type="compositionally biased region" description="Basic and acidic residues" evidence="4">
    <location>
        <begin position="214"/>
        <end position="226"/>
    </location>
</feature>
<feature type="splice variant" id="VSP_011846" description="In isoform 2." evidence="7">
    <original>MYGNYPHFIKFPAGFGN</original>
    <variation>MQPGMQAPYSLEMGSFPHF</variation>
    <location>
        <begin position="1"/>
        <end position="17"/>
    </location>
</feature>
<gene>
    <name type="primary">RXRG</name>
    <name type="synonym">NR2B3</name>
</gene>
<reference key="1">
    <citation type="journal article" date="1991" name="Development">
        <title>A member of the RXR nuclear receptor family is expressed in neural-crest-derived cells of the developing chick peripheral nervous system.</title>
        <authorList>
            <person name="Rowe A."/>
            <person name="Eager N.S.C."/>
            <person name="Brickell P.M."/>
        </authorList>
    </citation>
    <scope>NUCLEOTIDE SEQUENCE [MRNA] (ISOFORM 1)</scope>
    <scope>DEVELOPMENTAL STAGE</scope>
</reference>
<reference key="2">
    <citation type="journal article" date="1994" name="Biochem. J.">
        <title>The chicken retinoid-X-receptor-gamma gene gives rise to two distinct species of mRNA with different patterns of expression.</title>
        <authorList>
            <person name="Seleiro E.A."/>
            <person name="Darling D."/>
            <person name="Brickell P.M."/>
        </authorList>
    </citation>
    <scope>NUCLEOTIDE SEQUENCE [MRNA] OF 1-17 (ISOFORM 2)</scope>
    <scope>TISSUE SPECIFICITY</scope>
    <source>
        <tissue>Liver</tissue>
    </source>
</reference>
<organism>
    <name type="scientific">Gallus gallus</name>
    <name type="common">Chicken</name>
    <dbReference type="NCBI Taxonomy" id="9031"/>
    <lineage>
        <taxon>Eukaryota</taxon>
        <taxon>Metazoa</taxon>
        <taxon>Chordata</taxon>
        <taxon>Craniata</taxon>
        <taxon>Vertebrata</taxon>
        <taxon>Euteleostomi</taxon>
        <taxon>Archelosauria</taxon>
        <taxon>Archosauria</taxon>
        <taxon>Dinosauria</taxon>
        <taxon>Saurischia</taxon>
        <taxon>Theropoda</taxon>
        <taxon>Coelurosauria</taxon>
        <taxon>Aves</taxon>
        <taxon>Neognathae</taxon>
        <taxon>Galloanserae</taxon>
        <taxon>Galliformes</taxon>
        <taxon>Phasianidae</taxon>
        <taxon>Phasianinae</taxon>
        <taxon>Gallus</taxon>
    </lineage>
</organism>
<proteinExistence type="evidence at transcript level"/>